<evidence type="ECO:0000255" key="1"/>
<evidence type="ECO:0000256" key="2">
    <source>
        <dbReference type="SAM" id="MobiDB-lite"/>
    </source>
</evidence>
<evidence type="ECO:0000269" key="3">
    <source>
    </source>
</evidence>
<evidence type="ECO:0000269" key="4">
    <source>
    </source>
</evidence>
<evidence type="ECO:0000305" key="5"/>
<evidence type="ECO:0007744" key="6">
    <source>
    </source>
</evidence>
<evidence type="ECO:0007744" key="7">
    <source>
    </source>
</evidence>
<dbReference type="EMBL" id="Z38125">
    <property type="protein sequence ID" value="CAA86263.1"/>
    <property type="molecule type" value="Genomic_DNA"/>
</dbReference>
<dbReference type="EMBL" id="AY558083">
    <property type="protein sequence ID" value="AAS56409.1"/>
    <property type="molecule type" value="Genomic_DNA"/>
</dbReference>
<dbReference type="EMBL" id="BK006942">
    <property type="protein sequence ID" value="DAA08436.1"/>
    <property type="molecule type" value="Genomic_DNA"/>
</dbReference>
<dbReference type="PIR" id="S48455">
    <property type="entry name" value="S48455"/>
</dbReference>
<dbReference type="RefSeq" id="NP_012149.1">
    <property type="nucleotide sequence ID" value="NM_001179465.1"/>
</dbReference>
<dbReference type="BioGRID" id="34874">
    <property type="interactions" value="39"/>
</dbReference>
<dbReference type="DIP" id="DIP-2690N"/>
<dbReference type="FunCoup" id="P40476">
    <property type="interactions" value="128"/>
</dbReference>
<dbReference type="IntAct" id="P40476">
    <property type="interactions" value="2"/>
</dbReference>
<dbReference type="MINT" id="P40476"/>
<dbReference type="STRING" id="4932.YIL117C"/>
<dbReference type="iPTMnet" id="P40476"/>
<dbReference type="PaxDb" id="4932-YIL117C"/>
<dbReference type="PeptideAtlas" id="P40476"/>
<dbReference type="EnsemblFungi" id="YIL117C_mRNA">
    <property type="protein sequence ID" value="YIL117C"/>
    <property type="gene ID" value="YIL117C"/>
</dbReference>
<dbReference type="GeneID" id="854689"/>
<dbReference type="KEGG" id="sce:YIL117C"/>
<dbReference type="AGR" id="SGD:S000001379"/>
<dbReference type="SGD" id="S000001379">
    <property type="gene designation" value="PRM5"/>
</dbReference>
<dbReference type="VEuPathDB" id="FungiDB:YIL117C"/>
<dbReference type="eggNOG" id="ENOG502S625">
    <property type="taxonomic scope" value="Eukaryota"/>
</dbReference>
<dbReference type="GeneTree" id="ENSGT00940000176521"/>
<dbReference type="HOGENOM" id="CLU_061224_0_0_1"/>
<dbReference type="InParanoid" id="P40476"/>
<dbReference type="OMA" id="VSHTNNE"/>
<dbReference type="OrthoDB" id="4067836at2759"/>
<dbReference type="BioCyc" id="YEAST:G3O-31370-MONOMER"/>
<dbReference type="BioGRID-ORCS" id="854689">
    <property type="hits" value="4 hits in 10 CRISPR screens"/>
</dbReference>
<dbReference type="PRO" id="PR:P40476"/>
<dbReference type="Proteomes" id="UP000002311">
    <property type="component" value="Chromosome IX"/>
</dbReference>
<dbReference type="RNAct" id="P40476">
    <property type="molecule type" value="protein"/>
</dbReference>
<dbReference type="GO" id="GO:0005935">
    <property type="term" value="C:cellular bud neck"/>
    <property type="evidence" value="ECO:0000318"/>
    <property type="project" value="GO_Central"/>
</dbReference>
<dbReference type="GO" id="GO:0000324">
    <property type="term" value="C:fungal-type vacuole"/>
    <property type="evidence" value="ECO:0000318"/>
    <property type="project" value="GO_Central"/>
</dbReference>
<dbReference type="GO" id="GO:0016020">
    <property type="term" value="C:membrane"/>
    <property type="evidence" value="ECO:0007669"/>
    <property type="project" value="UniProtKB-SubCell"/>
</dbReference>
<dbReference type="InterPro" id="IPR051009">
    <property type="entry name" value="PRM"/>
</dbReference>
<dbReference type="PANTHER" id="PTHR36089">
    <property type="entry name" value="CHITIN SYNTHASE 3 COMPLEX PROTEIN CSI2-RELATED"/>
    <property type="match status" value="1"/>
</dbReference>
<dbReference type="PANTHER" id="PTHR36089:SF1">
    <property type="entry name" value="CHITIN SYNTHASE 3 COMPLEX PROTEIN CSI2-RELATED"/>
    <property type="match status" value="1"/>
</dbReference>
<reference key="1">
    <citation type="journal article" date="1997" name="Nature">
        <title>The nucleotide sequence of Saccharomyces cerevisiae chromosome IX.</title>
        <authorList>
            <person name="Churcher C.M."/>
            <person name="Bowman S."/>
            <person name="Badcock K."/>
            <person name="Bankier A.T."/>
            <person name="Brown D."/>
            <person name="Chillingworth T."/>
            <person name="Connor R."/>
            <person name="Devlin K."/>
            <person name="Gentles S."/>
            <person name="Hamlin N."/>
            <person name="Harris D.E."/>
            <person name="Horsnell T."/>
            <person name="Hunt S."/>
            <person name="Jagels K."/>
            <person name="Jones M."/>
            <person name="Lye G."/>
            <person name="Moule S."/>
            <person name="Odell C."/>
            <person name="Pearson D."/>
            <person name="Rajandream M.A."/>
            <person name="Rice P."/>
            <person name="Rowley N."/>
            <person name="Skelton J."/>
            <person name="Smith V."/>
            <person name="Walsh S.V."/>
            <person name="Whitehead S."/>
            <person name="Barrell B.G."/>
        </authorList>
    </citation>
    <scope>NUCLEOTIDE SEQUENCE [LARGE SCALE GENOMIC DNA]</scope>
    <source>
        <strain>ATCC 204508 / S288c</strain>
    </source>
</reference>
<reference key="2">
    <citation type="journal article" date="2014" name="G3 (Bethesda)">
        <title>The reference genome sequence of Saccharomyces cerevisiae: Then and now.</title>
        <authorList>
            <person name="Engel S.R."/>
            <person name="Dietrich F.S."/>
            <person name="Fisk D.G."/>
            <person name="Binkley G."/>
            <person name="Balakrishnan R."/>
            <person name="Costanzo M.C."/>
            <person name="Dwight S.S."/>
            <person name="Hitz B.C."/>
            <person name="Karra K."/>
            <person name="Nash R.S."/>
            <person name="Weng S."/>
            <person name="Wong E.D."/>
            <person name="Lloyd P."/>
            <person name="Skrzypek M.S."/>
            <person name="Miyasato S.R."/>
            <person name="Simison M."/>
            <person name="Cherry J.M."/>
        </authorList>
    </citation>
    <scope>GENOME REANNOTATION</scope>
    <source>
        <strain>ATCC 204508 / S288c</strain>
    </source>
</reference>
<reference key="3">
    <citation type="journal article" date="2007" name="Genome Res.">
        <title>Approaching a complete repository of sequence-verified protein-encoding clones for Saccharomyces cerevisiae.</title>
        <authorList>
            <person name="Hu Y."/>
            <person name="Rolfs A."/>
            <person name="Bhullar B."/>
            <person name="Murthy T.V.S."/>
            <person name="Zhu C."/>
            <person name="Berger M.F."/>
            <person name="Camargo A.A."/>
            <person name="Kelley F."/>
            <person name="McCarron S."/>
            <person name="Jepson D."/>
            <person name="Richardson A."/>
            <person name="Raphael J."/>
            <person name="Moreira D."/>
            <person name="Taycher E."/>
            <person name="Zuo D."/>
            <person name="Mohr S."/>
            <person name="Kane M.F."/>
            <person name="Williamson J."/>
            <person name="Simpson A.J.G."/>
            <person name="Bulyk M.L."/>
            <person name="Harlow E."/>
            <person name="Marsischky G."/>
            <person name="Kolodner R.D."/>
            <person name="LaBaer J."/>
        </authorList>
    </citation>
    <scope>NUCLEOTIDE SEQUENCE [GENOMIC DNA]</scope>
    <source>
        <strain>ATCC 204508 / S288c</strain>
    </source>
</reference>
<reference key="4">
    <citation type="journal article" date="1999" name="Mol. Microbiol.">
        <title>Genome-wide analysis of gene expression regulated by the yeast cell wall integrity signalling pathway.</title>
        <authorList>
            <person name="Jung U.S."/>
            <person name="Levin D.E."/>
        </authorList>
    </citation>
    <scope>INDUCTION</scope>
</reference>
<reference key="5">
    <citation type="journal article" date="2000" name="J. Cell Biol.">
        <title>Prm1p, a pheromone-regulated multispanning membrane protein, facilitates plasma membrane fusion during yeast mating.</title>
        <authorList>
            <person name="Heiman M.G."/>
            <person name="Walter P."/>
        </authorList>
    </citation>
    <scope>INDUCTION</scope>
</reference>
<reference key="6">
    <citation type="journal article" date="2007" name="J. Proteome Res.">
        <title>Large-scale phosphorylation analysis of alpha-factor-arrested Saccharomyces cerevisiae.</title>
        <authorList>
            <person name="Li X."/>
            <person name="Gerber S.A."/>
            <person name="Rudner A.D."/>
            <person name="Beausoleil S.A."/>
            <person name="Haas W."/>
            <person name="Villen J."/>
            <person name="Elias J.E."/>
            <person name="Gygi S.P."/>
        </authorList>
    </citation>
    <scope>PHOSPHORYLATION [LARGE SCALE ANALYSIS] AT SER-129; SER-279; SER-282 AND SER-288</scope>
    <scope>IDENTIFICATION BY MASS SPECTROMETRY [LARGE SCALE ANALYSIS]</scope>
    <source>
        <strain>ADR376</strain>
    </source>
</reference>
<reference key="7">
    <citation type="journal article" date="2008" name="Mol. Cell. Proteomics">
        <title>A multidimensional chromatography technology for in-depth phosphoproteome analysis.</title>
        <authorList>
            <person name="Albuquerque C.P."/>
            <person name="Smolka M.B."/>
            <person name="Payne S.H."/>
            <person name="Bafna V."/>
            <person name="Eng J."/>
            <person name="Zhou H."/>
        </authorList>
    </citation>
    <scope>IDENTIFICATION BY MASS SPECTROMETRY [LARGE SCALE ANALYSIS]</scope>
</reference>
<reference key="8">
    <citation type="journal article" date="2009" name="Science">
        <title>Global analysis of Cdk1 substrate phosphorylation sites provides insights into evolution.</title>
        <authorList>
            <person name="Holt L.J."/>
            <person name="Tuch B.B."/>
            <person name="Villen J."/>
            <person name="Johnson A.D."/>
            <person name="Gygi S.P."/>
            <person name="Morgan D.O."/>
        </authorList>
    </citation>
    <scope>IDENTIFICATION BY MASS SPECTROMETRY [LARGE SCALE ANALYSIS]</scope>
</reference>
<reference key="9">
    <citation type="journal article" date="2012" name="Proteomics">
        <title>Sites of ubiquitin attachment in Saccharomyces cerevisiae.</title>
        <authorList>
            <person name="Starita L.M."/>
            <person name="Lo R.S."/>
            <person name="Eng J.K."/>
            <person name="von Haller P.D."/>
            <person name="Fields S."/>
        </authorList>
    </citation>
    <scope>UBIQUITINATION [LARGE SCALE ANALYSIS] AT LYS-314</scope>
    <scope>IDENTIFICATION BY MASS SPECTROMETRY [LARGE SCALE ANALYSIS]</scope>
</reference>
<gene>
    <name type="primary">PRM5</name>
    <name type="ordered locus">YIL117C</name>
</gene>
<comment type="subcellular location">
    <subcellularLocation>
        <location evidence="5">Membrane</location>
        <topology evidence="5">Single-pass membrane protein</topology>
    </subcellularLocation>
</comment>
<comment type="induction">
    <text evidence="3 4">Expression is regulated by the cell integrity signaling pathway and by pheromone.</text>
</comment>
<comment type="similarity">
    <text evidence="5">Belongs to the PRM5 family.</text>
</comment>
<feature type="chain" id="PRO_0000202963" description="Pheromone-regulated membrane protein 5">
    <location>
        <begin position="1"/>
        <end position="318"/>
    </location>
</feature>
<feature type="transmembrane region" description="Helical" evidence="1">
    <location>
        <begin position="75"/>
        <end position="98"/>
    </location>
</feature>
<feature type="region of interest" description="Disordered" evidence="2">
    <location>
        <begin position="238"/>
        <end position="318"/>
    </location>
</feature>
<feature type="compositionally biased region" description="Low complexity" evidence="2">
    <location>
        <begin position="238"/>
        <end position="247"/>
    </location>
</feature>
<feature type="compositionally biased region" description="Basic and acidic residues" evidence="2">
    <location>
        <begin position="250"/>
        <end position="261"/>
    </location>
</feature>
<feature type="compositionally biased region" description="Polar residues" evidence="2">
    <location>
        <begin position="276"/>
        <end position="285"/>
    </location>
</feature>
<feature type="compositionally biased region" description="Basic and acidic residues" evidence="2">
    <location>
        <begin position="309"/>
        <end position="318"/>
    </location>
</feature>
<feature type="modified residue" description="Phosphoserine" evidence="6">
    <location>
        <position position="129"/>
    </location>
</feature>
<feature type="modified residue" description="Phosphoserine" evidence="6">
    <location>
        <position position="279"/>
    </location>
</feature>
<feature type="modified residue" description="Phosphoserine" evidence="6">
    <location>
        <position position="282"/>
    </location>
</feature>
<feature type="modified residue" description="Phosphoserine" evidence="6">
    <location>
        <position position="288"/>
    </location>
</feature>
<feature type="cross-link" description="Glycyl lysine isopeptide (Lys-Gly) (interchain with G-Cter in ubiquitin)" evidence="7">
    <location>
        <position position="314"/>
    </location>
</feature>
<protein>
    <recommendedName>
        <fullName>Pheromone-regulated membrane protein 5</fullName>
    </recommendedName>
</protein>
<name>PRM5_YEAST</name>
<accession>P40476</accession>
<accession>D6VVH0</accession>
<sequence length="318" mass="34651">MTVITIAKRGLPKLTTSTSSTTTASSSSTITSVASSSSSLPLLSNSTSSSIIPSITPPSRNGNPYILDSGDMPNGTVFIVVGGIAGVIFLAILLWWVITTYSSHRLTRSVQDYESKMFSTQHTQFYGDSPYMDYPAKENFQDQVHISESDISPGNKDESVKDALVSHTNNEKPFLSNFERPLFSLASESNRNSLFISPTGDILYKTRLSKLYQESPRLLQKPVIMTSDNVSTNSLVSTISSSSASSLDNGNEKEVGEDIRKPAKIASSPSRKLLNSPESDGSVNRNHSKGNLLVVQSKRKPTPSTYLEHMLEGKEQDE</sequence>
<keyword id="KW-1017">Isopeptide bond</keyword>
<keyword id="KW-0472">Membrane</keyword>
<keyword id="KW-0597">Phosphoprotein</keyword>
<keyword id="KW-1185">Reference proteome</keyword>
<keyword id="KW-0812">Transmembrane</keyword>
<keyword id="KW-1133">Transmembrane helix</keyword>
<keyword id="KW-0832">Ubl conjugation</keyword>
<proteinExistence type="evidence at protein level"/>
<organism>
    <name type="scientific">Saccharomyces cerevisiae (strain ATCC 204508 / S288c)</name>
    <name type="common">Baker's yeast</name>
    <dbReference type="NCBI Taxonomy" id="559292"/>
    <lineage>
        <taxon>Eukaryota</taxon>
        <taxon>Fungi</taxon>
        <taxon>Dikarya</taxon>
        <taxon>Ascomycota</taxon>
        <taxon>Saccharomycotina</taxon>
        <taxon>Saccharomycetes</taxon>
        <taxon>Saccharomycetales</taxon>
        <taxon>Saccharomycetaceae</taxon>
        <taxon>Saccharomyces</taxon>
    </lineage>
</organism>